<proteinExistence type="inferred from homology"/>
<feature type="signal peptide" evidence="1">
    <location>
        <begin position="1"/>
        <end position="22"/>
    </location>
</feature>
<feature type="chain" id="PRO_0000025647" description="Major prion protein">
    <location>
        <begin position="23"/>
        <end position="222"/>
    </location>
</feature>
<feature type="propeptide" id="PRO_0000025648" description="Removed in mature form" evidence="1">
    <location>
        <begin position="223"/>
        <end position="245"/>
    </location>
</feature>
<feature type="repeat" description="1">
    <location>
        <begin position="51"/>
        <end position="59"/>
    </location>
</feature>
<feature type="repeat" description="2">
    <location>
        <begin position="60"/>
        <end position="67"/>
    </location>
</feature>
<feature type="repeat" description="3">
    <location>
        <begin position="68"/>
        <end position="75"/>
    </location>
</feature>
<feature type="repeat" description="4">
    <location>
        <begin position="76"/>
        <end position="83"/>
    </location>
</feature>
<feature type="region of interest" description="Interaction with GRB2, ERI3 and SYN1" evidence="4">
    <location>
        <begin position="23"/>
        <end position="222"/>
    </location>
</feature>
<feature type="region of interest" description="Disordered" evidence="6">
    <location>
        <begin position="25"/>
        <end position="102"/>
    </location>
</feature>
<feature type="region of interest" description="4 X 8 AA tandem repeats of P-H-G-G-G-W-G-Q">
    <location>
        <begin position="51"/>
        <end position="83"/>
    </location>
</feature>
<feature type="compositionally biased region" description="Gly residues" evidence="6">
    <location>
        <begin position="52"/>
        <end position="87"/>
    </location>
</feature>
<feature type="compositionally biased region" description="Basic residues" evidence="6">
    <location>
        <begin position="90"/>
        <end position="101"/>
    </location>
</feature>
<feature type="binding site" evidence="2">
    <location>
        <position position="54"/>
    </location>
    <ligand>
        <name>Cu(2+)</name>
        <dbReference type="ChEBI" id="CHEBI:29036"/>
        <label>1</label>
    </ligand>
</feature>
<feature type="binding site" evidence="2">
    <location>
        <position position="55"/>
    </location>
    <ligand>
        <name>Cu(2+)</name>
        <dbReference type="ChEBI" id="CHEBI:29036"/>
        <label>1</label>
    </ligand>
</feature>
<feature type="binding site" evidence="2">
    <location>
        <position position="61"/>
    </location>
    <ligand>
        <name>Cu(2+)</name>
        <dbReference type="ChEBI" id="CHEBI:29036"/>
        <label>2</label>
    </ligand>
</feature>
<feature type="binding site" evidence="2">
    <location>
        <position position="62"/>
    </location>
    <ligand>
        <name>Cu(2+)</name>
        <dbReference type="ChEBI" id="CHEBI:29036"/>
        <label>2</label>
    </ligand>
</feature>
<feature type="binding site" evidence="2">
    <location>
        <position position="63"/>
    </location>
    <ligand>
        <name>Cu(2+)</name>
        <dbReference type="ChEBI" id="CHEBI:29036"/>
        <label>2</label>
    </ligand>
</feature>
<feature type="binding site" evidence="2">
    <location>
        <position position="69"/>
    </location>
    <ligand>
        <name>Cu(2+)</name>
        <dbReference type="ChEBI" id="CHEBI:29036"/>
        <label>3</label>
    </ligand>
</feature>
<feature type="binding site" evidence="2">
    <location>
        <position position="70"/>
    </location>
    <ligand>
        <name>Cu(2+)</name>
        <dbReference type="ChEBI" id="CHEBI:29036"/>
        <label>3</label>
    </ligand>
</feature>
<feature type="binding site" evidence="2">
    <location>
        <position position="71"/>
    </location>
    <ligand>
        <name>Cu(2+)</name>
        <dbReference type="ChEBI" id="CHEBI:29036"/>
        <label>3</label>
    </ligand>
</feature>
<feature type="binding site" evidence="2">
    <location>
        <position position="77"/>
    </location>
    <ligand>
        <name>Cu(2+)</name>
        <dbReference type="ChEBI" id="CHEBI:29036"/>
        <label>4</label>
    </ligand>
</feature>
<feature type="binding site" evidence="2">
    <location>
        <position position="78"/>
    </location>
    <ligand>
        <name>Cu(2+)</name>
        <dbReference type="ChEBI" id="CHEBI:29036"/>
        <label>4</label>
    </ligand>
</feature>
<feature type="binding site" evidence="2">
    <location>
        <position position="79"/>
    </location>
    <ligand>
        <name>Cu(2+)</name>
        <dbReference type="ChEBI" id="CHEBI:29036"/>
        <label>4</label>
    </ligand>
</feature>
<feature type="lipid moiety-binding region" description="GPI-anchor amidated serine" evidence="3">
    <location>
        <position position="222"/>
    </location>
</feature>
<feature type="glycosylation site" description="N-linked (GlcNAc...) asparagine" evidence="5">
    <location>
        <position position="173"/>
    </location>
</feature>
<feature type="glycosylation site" description="N-linked (GlcNAc...) asparagine" evidence="5">
    <location>
        <position position="189"/>
    </location>
</feature>
<feature type="disulfide bond" evidence="3">
    <location>
        <begin position="171"/>
        <end position="206"/>
    </location>
</feature>
<protein>
    <recommendedName>
        <fullName>Major prion protein</fullName>
        <shortName>PrP</shortName>
    </recommendedName>
    <alternativeName>
        <fullName>PrP27-30</fullName>
    </alternativeName>
    <alternativeName>
        <fullName>PrP33-35C</fullName>
    </alternativeName>
    <cdAntigenName>CD230</cdAntigenName>
</protein>
<evidence type="ECO:0000250" key="1"/>
<evidence type="ECO:0000250" key="2">
    <source>
        <dbReference type="UniProtKB" id="P04156"/>
    </source>
</evidence>
<evidence type="ECO:0000250" key="3">
    <source>
        <dbReference type="UniProtKB" id="P04273"/>
    </source>
</evidence>
<evidence type="ECO:0000250" key="4">
    <source>
        <dbReference type="UniProtKB" id="P04925"/>
    </source>
</evidence>
<evidence type="ECO:0000255" key="5"/>
<evidence type="ECO:0000256" key="6">
    <source>
        <dbReference type="SAM" id="MobiDB-lite"/>
    </source>
</evidence>
<evidence type="ECO:0000305" key="7"/>
<dbReference type="EMBL" id="U08291">
    <property type="protein sequence ID" value="AAC50080.1"/>
    <property type="molecule type" value="Genomic_DNA"/>
</dbReference>
<dbReference type="PIR" id="S53627">
    <property type="entry name" value="S53627"/>
</dbReference>
<dbReference type="SMR" id="P67988"/>
<dbReference type="GlyCosmos" id="P67988">
    <property type="glycosylation" value="2 sites, No reported glycans"/>
</dbReference>
<dbReference type="GO" id="GO:0005794">
    <property type="term" value="C:Golgi apparatus"/>
    <property type="evidence" value="ECO:0007669"/>
    <property type="project" value="UniProtKB-SubCell"/>
</dbReference>
<dbReference type="GO" id="GO:0005886">
    <property type="term" value="C:plasma membrane"/>
    <property type="evidence" value="ECO:0007669"/>
    <property type="project" value="UniProtKB-SubCell"/>
</dbReference>
<dbReference type="GO" id="GO:0098552">
    <property type="term" value="C:side of membrane"/>
    <property type="evidence" value="ECO:0007669"/>
    <property type="project" value="UniProtKB-KW"/>
</dbReference>
<dbReference type="GO" id="GO:0005507">
    <property type="term" value="F:copper ion binding"/>
    <property type="evidence" value="ECO:0000250"/>
    <property type="project" value="UniProtKB"/>
</dbReference>
<dbReference type="GO" id="GO:0051260">
    <property type="term" value="P:protein homooligomerization"/>
    <property type="evidence" value="ECO:0007669"/>
    <property type="project" value="InterPro"/>
</dbReference>
<dbReference type="FunFam" id="1.10.790.10:FF:000001">
    <property type="entry name" value="Major prion protein"/>
    <property type="match status" value="1"/>
</dbReference>
<dbReference type="Gene3D" id="1.10.790.10">
    <property type="entry name" value="Prion/Doppel protein, beta-ribbon domain"/>
    <property type="match status" value="1"/>
</dbReference>
<dbReference type="InterPro" id="IPR000817">
    <property type="entry name" value="Prion"/>
</dbReference>
<dbReference type="InterPro" id="IPR036924">
    <property type="entry name" value="Prion/Doppel_b-ribbon_dom_sf"/>
</dbReference>
<dbReference type="InterPro" id="IPR022416">
    <property type="entry name" value="Prion/Doppel_prot_b-ribbon_dom"/>
</dbReference>
<dbReference type="InterPro" id="IPR020949">
    <property type="entry name" value="Prion_copper_b_octapeptide"/>
</dbReference>
<dbReference type="InterPro" id="IPR025860">
    <property type="entry name" value="Prion_N"/>
</dbReference>
<dbReference type="PANTHER" id="PTHR15506">
    <property type="entry name" value="DOPPEL PRION"/>
    <property type="match status" value="1"/>
</dbReference>
<dbReference type="PANTHER" id="PTHR15506:SF2">
    <property type="entry name" value="MAJOR PRION PROTEIN"/>
    <property type="match status" value="1"/>
</dbReference>
<dbReference type="Pfam" id="PF00377">
    <property type="entry name" value="Prion"/>
    <property type="match status" value="1"/>
</dbReference>
<dbReference type="Pfam" id="PF11587">
    <property type="entry name" value="Prion_bPrPp"/>
    <property type="match status" value="1"/>
</dbReference>
<dbReference type="Pfam" id="PF03991">
    <property type="entry name" value="Prion_octapep"/>
    <property type="match status" value="1"/>
</dbReference>
<dbReference type="PRINTS" id="PR00341">
    <property type="entry name" value="PRION"/>
</dbReference>
<dbReference type="SMART" id="SM00157">
    <property type="entry name" value="PRP"/>
    <property type="match status" value="1"/>
</dbReference>
<dbReference type="SUPFAM" id="SSF54098">
    <property type="entry name" value="Prion-like"/>
    <property type="match status" value="1"/>
</dbReference>
<dbReference type="PROSITE" id="PS00291">
    <property type="entry name" value="PRION_1"/>
    <property type="match status" value="1"/>
</dbReference>
<dbReference type="PROSITE" id="PS00706">
    <property type="entry name" value="PRION_2"/>
    <property type="match status" value="1"/>
</dbReference>
<comment type="function">
    <text evidence="2 4">Its primary physiological function is unclear. Has cytoprotective activity against internal or environmental stresses. May play a role in neuronal development and synaptic plasticity. May be required for neuronal myelin sheath maintenance. May play a role in iron uptake and iron homeostasis. Soluble oligomers are toxic to cultured neuroblastoma cells and induce apoptosis (in vitro). Association with GPC1 (via its heparan sulfate chains) targets PRNP to lipid rafts. Also provides Cu(2+) or Zn(2+) for the ascorbate-mediated GPC1 deaminase degradation of its heparan sulfate side chains (By similarity).</text>
</comment>
<comment type="subunit">
    <text evidence="2 4">Monomer and homodimer. Has a tendency to aggregate into amyloid fibrils containing a cross-beta spine, formed by a steric zipper of superposed beta-strands. Soluble oligomers may represent an intermediate stage on the path to fibril formation. Copper binding may promote oligomerization. Interacts with GRB2, APP, ERI3/PRNPIP and SYN1. Mislocalized cytosolically exposed PrP interacts with MGRN1; this interaction alters MGRN1 subcellular location and causes lysosomal enlargement. Interacts with KIAA1191.</text>
</comment>
<comment type="subcellular location">
    <subcellularLocation>
        <location evidence="2">Cell membrane</location>
        <topology evidence="2">Lipid-anchor</topology>
        <topology evidence="2">GPI-anchor</topology>
    </subcellularLocation>
    <subcellularLocation>
        <location evidence="4">Golgi apparatus</location>
    </subcellularLocation>
    <text evidence="2">Targeted to lipid rafts via association with the heparan sulfate chains of GPC1. Colocates, in the presence of Cu(2+), to vesicles in para- and perinuclear regions, where both proteins undergo internalization. Heparin displaces PRNP from lipid rafts and promotes endocytosis.</text>
</comment>
<comment type="domain">
    <text evidence="2">The normal, monomeric form has a mainly alpha-helical structure. The disease-associated, protease-resistant form forms amyloid fibrils containing a cross-beta spine, formed by a steric zipper of superposed beta-strands. Disease mutations may favor intermolecular contacts via short beta strands, and may thereby trigger oligomerization.</text>
</comment>
<comment type="domain">
    <text evidence="2">Contains an N-terminal region composed of octamer repeats. At low copper concentrations, the sidechains of His residues from three or four repeats contribute to the binding of a single copper ion. Alternatively, a copper ion can be bound by interaction with the sidechain and backbone amide nitrogen of a single His residue. The observed copper binding stoichiometry suggests that two repeat regions cooperate to stabilize the binding of a single copper ion. At higher copper concentrations, each octamer can bind one copper ion by interactions with the His sidechain and Gly backbone atoms. A mixture of binding types may occur, especially in the case of octamer repeat expansion. Copper binding may stabilize the conformation of this region and may promote oligomerization.</text>
</comment>
<comment type="disease">
    <text evidence="7">PrP is found in high quantity in the brain of humans and animals infected with the degenerative neurological diseases kuru, Creutzfeldt-Jakob disease (CJD), Gerstmann-Straussler syndrome (GSS), scrapie, bovine spongiform encephalopathy (BSE), transmissible mink encephalopathy (TME), etc.</text>
</comment>
<comment type="similarity">
    <text evidence="7">Belongs to the prion family.</text>
</comment>
<keyword id="KW-0034">Amyloid</keyword>
<keyword id="KW-1003">Cell membrane</keyword>
<keyword id="KW-0186">Copper</keyword>
<keyword id="KW-1015">Disulfide bond</keyword>
<keyword id="KW-0325">Glycoprotein</keyword>
<keyword id="KW-0333">Golgi apparatus</keyword>
<keyword id="KW-0336">GPI-anchor</keyword>
<keyword id="KW-0449">Lipoprotein</keyword>
<keyword id="KW-0472">Membrane</keyword>
<keyword id="KW-0479">Metal-binding</keyword>
<keyword id="KW-0640">Prion</keyword>
<keyword id="KW-0677">Repeat</keyword>
<keyword id="KW-0732">Signal</keyword>
<keyword id="KW-0862">Zinc</keyword>
<organism>
    <name type="scientific">Chlorocebus aethiops</name>
    <name type="common">Green monkey</name>
    <name type="synonym">Cercopithecus aethiops</name>
    <dbReference type="NCBI Taxonomy" id="9534"/>
    <lineage>
        <taxon>Eukaryota</taxon>
        <taxon>Metazoa</taxon>
        <taxon>Chordata</taxon>
        <taxon>Craniata</taxon>
        <taxon>Vertebrata</taxon>
        <taxon>Euteleostomi</taxon>
        <taxon>Mammalia</taxon>
        <taxon>Eutheria</taxon>
        <taxon>Euarchontoglires</taxon>
        <taxon>Primates</taxon>
        <taxon>Haplorrhini</taxon>
        <taxon>Catarrhini</taxon>
        <taxon>Cercopithecidae</taxon>
        <taxon>Cercopithecinae</taxon>
        <taxon>Chlorocebus</taxon>
    </lineage>
</organism>
<sequence length="245" mass="26885">MANLGCWMLVVFVATWSDLGLCKKRPKPGGWNTGGSRYPGQGSPGGNRYPPQGGGGWGQPHGGGWGQPHGGGWGQPHGGGWGQGGGTHNQWHKPSKPKTSMKHMAGAAAAGAVVGGLGGYMLGSAMSRPLIHFGNDYEDRYYRENMYRYPNQVYYRPVDQYSNQNNFVHDCVNITIKQHTVTTTTKGENFTETDVKMMERVVEQMCITQYEKESQAYYQRGSSMVLFSSPPVILLISFLIFLIVG</sequence>
<reference key="1">
    <citation type="journal article" date="1995" name="J. Mol. Biol.">
        <title>Prion protein gene variation among primates.</title>
        <authorList>
            <person name="Schaetzl H.M."/>
            <person name="Da Costa M."/>
            <person name="Taylor L."/>
            <person name="Cohen F.E."/>
            <person name="Prusiner S.B."/>
        </authorList>
    </citation>
    <scope>NUCLEOTIDE SEQUENCE [GENOMIC DNA]</scope>
</reference>
<reference key="2">
    <citation type="journal article" date="1997" name="J. Mol. Biol.">
        <authorList>
            <person name="Schaetzl H.M."/>
            <person name="Da Costa M."/>
            <person name="Taylor L."/>
            <person name="Cohen F.E."/>
            <person name="Prusiner S.B."/>
        </authorList>
    </citation>
    <scope>ERRATUM OF PUBMED:7837269</scope>
</reference>
<name>PRIO_CHLAE</name>
<accession>P67988</accession>
<accession>P40250</accession>
<gene>
    <name type="primary">PRNP</name>
    <name type="synonym">PRP</name>
</gene>